<name>CH60_ECO45</name>
<reference key="1">
    <citation type="journal article" date="2009" name="PLoS Genet.">
        <title>Organised genome dynamics in the Escherichia coli species results in highly diverse adaptive paths.</title>
        <authorList>
            <person name="Touchon M."/>
            <person name="Hoede C."/>
            <person name="Tenaillon O."/>
            <person name="Barbe V."/>
            <person name="Baeriswyl S."/>
            <person name="Bidet P."/>
            <person name="Bingen E."/>
            <person name="Bonacorsi S."/>
            <person name="Bouchier C."/>
            <person name="Bouvet O."/>
            <person name="Calteau A."/>
            <person name="Chiapello H."/>
            <person name="Clermont O."/>
            <person name="Cruveiller S."/>
            <person name="Danchin A."/>
            <person name="Diard M."/>
            <person name="Dossat C."/>
            <person name="Karoui M.E."/>
            <person name="Frapy E."/>
            <person name="Garry L."/>
            <person name="Ghigo J.M."/>
            <person name="Gilles A.M."/>
            <person name="Johnson J."/>
            <person name="Le Bouguenec C."/>
            <person name="Lescat M."/>
            <person name="Mangenot S."/>
            <person name="Martinez-Jehanne V."/>
            <person name="Matic I."/>
            <person name="Nassif X."/>
            <person name="Oztas S."/>
            <person name="Petit M.A."/>
            <person name="Pichon C."/>
            <person name="Rouy Z."/>
            <person name="Ruf C.S."/>
            <person name="Schneider D."/>
            <person name="Tourret J."/>
            <person name="Vacherie B."/>
            <person name="Vallenet D."/>
            <person name="Medigue C."/>
            <person name="Rocha E.P.C."/>
            <person name="Denamur E."/>
        </authorList>
    </citation>
    <scope>NUCLEOTIDE SEQUENCE [LARGE SCALE GENOMIC DNA]</scope>
    <source>
        <strain>S88 / ExPEC</strain>
    </source>
</reference>
<protein>
    <recommendedName>
        <fullName evidence="1">Chaperonin GroEL</fullName>
        <ecNumber evidence="1">5.6.1.7</ecNumber>
    </recommendedName>
    <alternativeName>
        <fullName evidence="1">60 kDa chaperonin</fullName>
    </alternativeName>
    <alternativeName>
        <fullName evidence="1">Chaperonin-60</fullName>
        <shortName evidence="1">Cpn60</shortName>
    </alternativeName>
</protein>
<accession>B7MKU8</accession>
<evidence type="ECO:0000255" key="1">
    <source>
        <dbReference type="HAMAP-Rule" id="MF_00600"/>
    </source>
</evidence>
<keyword id="KW-0067">ATP-binding</keyword>
<keyword id="KW-0143">Chaperone</keyword>
<keyword id="KW-0963">Cytoplasm</keyword>
<keyword id="KW-0413">Isomerase</keyword>
<keyword id="KW-0547">Nucleotide-binding</keyword>
<keyword id="KW-1185">Reference proteome</keyword>
<sequence length="548" mass="57329">MAAKDVKFGNDARVKMLRGVNVLADAVKVTLGPKGRNVVLDKSFGAPTITKDGVSVAREIELEDKFENMGAQMVKEVASKANDAAGDGTTTATVLAQAIITEGLKAVAAGMNPMDLKRGIDKAVTAAVEELKALSVPCSDSKAIAQVGTISANSDETVGKLIAEAMDKVGKEGVITVEDGTGLQDELDVVEGMQFDRGYLSPYFINKPETGAVELESPFILLADKKISNIREMLPVLEAVAKAGKPLLIIAEDVEGEALATLVVNTMRGIVKVAAVKAPGFGDRRKAMLQDIATLTGGTVISEEIGMELEKATLEDLGQAKRVVINKDTTTIIDGVGEEAAIQGRVAQIRQQIEEATSDYDREKLQERVAKLAGGVAVIKVGAATEVEMKEKKARVEDALHATRAAVEEGVVAGGGVALIRVASKLADLRGQNEDQNVGIKVALRAMEAPLRQIVLNCGEEPSVVANTVKGGDGNYGYNAATEEYGNMIDMGILDPTKVTRSALQYAASVAGLMITTECMVTDLPKNDAADLGAAGGMGGMGGMGGMM</sequence>
<gene>
    <name evidence="1" type="primary">groEL</name>
    <name evidence="1" type="synonym">groL</name>
    <name type="ordered locus">ECS88_4729</name>
</gene>
<feature type="chain" id="PRO_1000130006" description="Chaperonin GroEL">
    <location>
        <begin position="1"/>
        <end position="548"/>
    </location>
</feature>
<feature type="binding site" evidence="1">
    <location>
        <begin position="30"/>
        <end position="33"/>
    </location>
    <ligand>
        <name>ATP</name>
        <dbReference type="ChEBI" id="CHEBI:30616"/>
    </ligand>
</feature>
<feature type="binding site" evidence="1">
    <location>
        <position position="51"/>
    </location>
    <ligand>
        <name>ATP</name>
        <dbReference type="ChEBI" id="CHEBI:30616"/>
    </ligand>
</feature>
<feature type="binding site" evidence="1">
    <location>
        <begin position="87"/>
        <end position="91"/>
    </location>
    <ligand>
        <name>ATP</name>
        <dbReference type="ChEBI" id="CHEBI:30616"/>
    </ligand>
</feature>
<feature type="binding site" evidence="1">
    <location>
        <position position="415"/>
    </location>
    <ligand>
        <name>ATP</name>
        <dbReference type="ChEBI" id="CHEBI:30616"/>
    </ligand>
</feature>
<feature type="binding site" evidence="1">
    <location>
        <begin position="479"/>
        <end position="481"/>
    </location>
    <ligand>
        <name>ATP</name>
        <dbReference type="ChEBI" id="CHEBI:30616"/>
    </ligand>
</feature>
<feature type="binding site" evidence="1">
    <location>
        <position position="495"/>
    </location>
    <ligand>
        <name>ATP</name>
        <dbReference type="ChEBI" id="CHEBI:30616"/>
    </ligand>
</feature>
<organism>
    <name type="scientific">Escherichia coli O45:K1 (strain S88 / ExPEC)</name>
    <dbReference type="NCBI Taxonomy" id="585035"/>
    <lineage>
        <taxon>Bacteria</taxon>
        <taxon>Pseudomonadati</taxon>
        <taxon>Pseudomonadota</taxon>
        <taxon>Gammaproteobacteria</taxon>
        <taxon>Enterobacterales</taxon>
        <taxon>Enterobacteriaceae</taxon>
        <taxon>Escherichia</taxon>
    </lineage>
</organism>
<dbReference type="EC" id="5.6.1.7" evidence="1"/>
<dbReference type="EMBL" id="CU928161">
    <property type="protein sequence ID" value="CAR05879.1"/>
    <property type="molecule type" value="Genomic_DNA"/>
</dbReference>
<dbReference type="RefSeq" id="WP_000729117.1">
    <property type="nucleotide sequence ID" value="NC_011742.1"/>
</dbReference>
<dbReference type="SMR" id="B7MKU8"/>
<dbReference type="GeneID" id="93777681"/>
<dbReference type="KEGG" id="ecz:ECS88_4729"/>
<dbReference type="HOGENOM" id="CLU_016503_3_0_6"/>
<dbReference type="Proteomes" id="UP000000747">
    <property type="component" value="Chromosome"/>
</dbReference>
<dbReference type="GO" id="GO:0005737">
    <property type="term" value="C:cytoplasm"/>
    <property type="evidence" value="ECO:0007669"/>
    <property type="project" value="UniProtKB-SubCell"/>
</dbReference>
<dbReference type="GO" id="GO:0005524">
    <property type="term" value="F:ATP binding"/>
    <property type="evidence" value="ECO:0007669"/>
    <property type="project" value="UniProtKB-UniRule"/>
</dbReference>
<dbReference type="GO" id="GO:0140662">
    <property type="term" value="F:ATP-dependent protein folding chaperone"/>
    <property type="evidence" value="ECO:0007669"/>
    <property type="project" value="InterPro"/>
</dbReference>
<dbReference type="GO" id="GO:0016853">
    <property type="term" value="F:isomerase activity"/>
    <property type="evidence" value="ECO:0007669"/>
    <property type="project" value="UniProtKB-KW"/>
</dbReference>
<dbReference type="GO" id="GO:0051082">
    <property type="term" value="F:unfolded protein binding"/>
    <property type="evidence" value="ECO:0007669"/>
    <property type="project" value="UniProtKB-UniRule"/>
</dbReference>
<dbReference type="GO" id="GO:0042026">
    <property type="term" value="P:protein refolding"/>
    <property type="evidence" value="ECO:0007669"/>
    <property type="project" value="UniProtKB-UniRule"/>
</dbReference>
<dbReference type="CDD" id="cd03344">
    <property type="entry name" value="GroEL"/>
    <property type="match status" value="1"/>
</dbReference>
<dbReference type="FunFam" id="1.10.560.10:FF:000001">
    <property type="entry name" value="60 kDa chaperonin"/>
    <property type="match status" value="1"/>
</dbReference>
<dbReference type="FunFam" id="3.50.7.10:FF:000001">
    <property type="entry name" value="60 kDa chaperonin"/>
    <property type="match status" value="1"/>
</dbReference>
<dbReference type="Gene3D" id="3.50.7.10">
    <property type="entry name" value="GroEL"/>
    <property type="match status" value="1"/>
</dbReference>
<dbReference type="Gene3D" id="1.10.560.10">
    <property type="entry name" value="GroEL-like equatorial domain"/>
    <property type="match status" value="1"/>
</dbReference>
<dbReference type="Gene3D" id="3.30.260.10">
    <property type="entry name" value="TCP-1-like chaperonin intermediate domain"/>
    <property type="match status" value="1"/>
</dbReference>
<dbReference type="HAMAP" id="MF_00600">
    <property type="entry name" value="CH60"/>
    <property type="match status" value="1"/>
</dbReference>
<dbReference type="InterPro" id="IPR018370">
    <property type="entry name" value="Chaperonin_Cpn60_CS"/>
</dbReference>
<dbReference type="InterPro" id="IPR001844">
    <property type="entry name" value="Cpn60/GroEL"/>
</dbReference>
<dbReference type="InterPro" id="IPR002423">
    <property type="entry name" value="Cpn60/GroEL/TCP-1"/>
</dbReference>
<dbReference type="InterPro" id="IPR027409">
    <property type="entry name" value="GroEL-like_apical_dom_sf"/>
</dbReference>
<dbReference type="InterPro" id="IPR027413">
    <property type="entry name" value="GROEL-like_equatorial_sf"/>
</dbReference>
<dbReference type="InterPro" id="IPR027410">
    <property type="entry name" value="TCP-1-like_intermed_sf"/>
</dbReference>
<dbReference type="NCBIfam" id="TIGR02348">
    <property type="entry name" value="GroEL"/>
    <property type="match status" value="1"/>
</dbReference>
<dbReference type="NCBIfam" id="NF000592">
    <property type="entry name" value="PRK00013.1"/>
    <property type="match status" value="1"/>
</dbReference>
<dbReference type="NCBIfam" id="NF009487">
    <property type="entry name" value="PRK12849.1"/>
    <property type="match status" value="1"/>
</dbReference>
<dbReference type="NCBIfam" id="NF009488">
    <property type="entry name" value="PRK12850.1"/>
    <property type="match status" value="1"/>
</dbReference>
<dbReference type="NCBIfam" id="NF009489">
    <property type="entry name" value="PRK12851.1"/>
    <property type="match status" value="1"/>
</dbReference>
<dbReference type="PANTHER" id="PTHR45633">
    <property type="entry name" value="60 KDA HEAT SHOCK PROTEIN, MITOCHONDRIAL"/>
    <property type="match status" value="1"/>
</dbReference>
<dbReference type="Pfam" id="PF00118">
    <property type="entry name" value="Cpn60_TCP1"/>
    <property type="match status" value="1"/>
</dbReference>
<dbReference type="PRINTS" id="PR00298">
    <property type="entry name" value="CHAPERONIN60"/>
</dbReference>
<dbReference type="SUPFAM" id="SSF52029">
    <property type="entry name" value="GroEL apical domain-like"/>
    <property type="match status" value="1"/>
</dbReference>
<dbReference type="SUPFAM" id="SSF48592">
    <property type="entry name" value="GroEL equatorial domain-like"/>
    <property type="match status" value="1"/>
</dbReference>
<dbReference type="SUPFAM" id="SSF54849">
    <property type="entry name" value="GroEL-intermediate domain like"/>
    <property type="match status" value="1"/>
</dbReference>
<dbReference type="PROSITE" id="PS00296">
    <property type="entry name" value="CHAPERONINS_CPN60"/>
    <property type="match status" value="1"/>
</dbReference>
<proteinExistence type="inferred from homology"/>
<comment type="function">
    <text evidence="1">Together with its co-chaperonin GroES, plays an essential role in assisting protein folding. The GroEL-GroES system forms a nano-cage that allows encapsulation of the non-native substrate proteins and provides a physical environment optimized to promote and accelerate protein folding.</text>
</comment>
<comment type="catalytic activity">
    <reaction evidence="1">
        <text>ATP + H2O + a folded polypeptide = ADP + phosphate + an unfolded polypeptide.</text>
        <dbReference type="EC" id="5.6.1.7"/>
    </reaction>
</comment>
<comment type="subunit">
    <text evidence="1">Forms a cylinder of 14 subunits composed of two heptameric rings stacked back-to-back. Interacts with the co-chaperonin GroES.</text>
</comment>
<comment type="subcellular location">
    <subcellularLocation>
        <location evidence="1">Cytoplasm</location>
    </subcellularLocation>
</comment>
<comment type="similarity">
    <text evidence="1">Belongs to the chaperonin (HSP60) family.</text>
</comment>